<dbReference type="EMBL" id="BC084961">
    <property type="protein sequence ID" value="AAH84961.1"/>
    <property type="molecule type" value="mRNA"/>
</dbReference>
<dbReference type="RefSeq" id="NP_001088562.1">
    <property type="nucleotide sequence ID" value="NM_001095093.1"/>
</dbReference>
<dbReference type="SMR" id="Q5U4T3"/>
<dbReference type="DNASU" id="495439"/>
<dbReference type="AGR" id="Xenbase:XB-GENE-1011983"/>
<dbReference type="Xenbase" id="XB-GENE-1011983">
    <property type="gene designation" value="arhgap26.L"/>
</dbReference>
<dbReference type="Proteomes" id="UP000186698">
    <property type="component" value="Unplaced"/>
</dbReference>
<dbReference type="Bgee" id="495439">
    <property type="expression patterns" value="Expressed in testis and 17 other cell types or tissues"/>
</dbReference>
<dbReference type="GO" id="GO:0005856">
    <property type="term" value="C:cytoskeleton"/>
    <property type="evidence" value="ECO:0007669"/>
    <property type="project" value="UniProtKB-SubCell"/>
</dbReference>
<dbReference type="GO" id="GO:0005829">
    <property type="term" value="C:cytosol"/>
    <property type="evidence" value="ECO:0000250"/>
    <property type="project" value="UniProtKB"/>
</dbReference>
<dbReference type="GO" id="GO:0010008">
    <property type="term" value="C:endosome membrane"/>
    <property type="evidence" value="ECO:0000250"/>
    <property type="project" value="UniProtKB"/>
</dbReference>
<dbReference type="GO" id="GO:0005925">
    <property type="term" value="C:focal adhesion"/>
    <property type="evidence" value="ECO:0007669"/>
    <property type="project" value="UniProtKB-SubCell"/>
</dbReference>
<dbReference type="GO" id="GO:0005096">
    <property type="term" value="F:GTPase activator activity"/>
    <property type="evidence" value="ECO:0000318"/>
    <property type="project" value="GO_Central"/>
</dbReference>
<dbReference type="GO" id="GO:0007165">
    <property type="term" value="P:signal transduction"/>
    <property type="evidence" value="ECO:0007669"/>
    <property type="project" value="InterPro"/>
</dbReference>
<dbReference type="CDD" id="cd01249">
    <property type="entry name" value="BAR-PH_GRAF_family"/>
    <property type="match status" value="1"/>
</dbReference>
<dbReference type="CDD" id="cd07636">
    <property type="entry name" value="BAR_GRAF"/>
    <property type="match status" value="1"/>
</dbReference>
<dbReference type="CDD" id="cd04374">
    <property type="entry name" value="RhoGAP_Graf"/>
    <property type="match status" value="1"/>
</dbReference>
<dbReference type="CDD" id="cd12064">
    <property type="entry name" value="SH3_GRAF"/>
    <property type="match status" value="1"/>
</dbReference>
<dbReference type="FunFam" id="1.10.555.10:FF:000006">
    <property type="entry name" value="Rho GTPase activating protein 26"/>
    <property type="match status" value="1"/>
</dbReference>
<dbReference type="FunFam" id="2.30.29.30:FF:000116">
    <property type="entry name" value="Rho GTPase activating protein 26"/>
    <property type="match status" value="1"/>
</dbReference>
<dbReference type="FunFam" id="1.20.1270.60:FF:000001">
    <property type="entry name" value="Rho GTPase-activating protein 26"/>
    <property type="match status" value="1"/>
</dbReference>
<dbReference type="FunFam" id="2.30.30.40:FF:000055">
    <property type="entry name" value="rho GTPase-activating protein 26 isoform X1"/>
    <property type="match status" value="1"/>
</dbReference>
<dbReference type="Gene3D" id="1.20.1270.60">
    <property type="entry name" value="Arfaptin homology (AH) domain/BAR domain"/>
    <property type="match status" value="1"/>
</dbReference>
<dbReference type="Gene3D" id="2.30.29.30">
    <property type="entry name" value="Pleckstrin-homology domain (PH domain)/Phosphotyrosine-binding domain (PTB)"/>
    <property type="match status" value="1"/>
</dbReference>
<dbReference type="Gene3D" id="1.10.555.10">
    <property type="entry name" value="Rho GTPase activation protein"/>
    <property type="match status" value="1"/>
</dbReference>
<dbReference type="Gene3D" id="2.30.30.40">
    <property type="entry name" value="SH3 Domains"/>
    <property type="match status" value="1"/>
</dbReference>
<dbReference type="InterPro" id="IPR027267">
    <property type="entry name" value="AH/BAR_dom_sf"/>
</dbReference>
<dbReference type="InterPro" id="IPR004148">
    <property type="entry name" value="BAR_dom"/>
</dbReference>
<dbReference type="InterPro" id="IPR035483">
    <property type="entry name" value="GRAF_BAR"/>
</dbReference>
<dbReference type="InterPro" id="IPR047234">
    <property type="entry name" value="GRAF_fam"/>
</dbReference>
<dbReference type="InterPro" id="IPR035481">
    <property type="entry name" value="GRAF_SH3"/>
</dbReference>
<dbReference type="InterPro" id="IPR011993">
    <property type="entry name" value="PH-like_dom_sf"/>
</dbReference>
<dbReference type="InterPro" id="IPR001849">
    <property type="entry name" value="PH_domain"/>
</dbReference>
<dbReference type="InterPro" id="IPR047225">
    <property type="entry name" value="PH_GRAF"/>
</dbReference>
<dbReference type="InterPro" id="IPR008936">
    <property type="entry name" value="Rho_GTPase_activation_prot"/>
</dbReference>
<dbReference type="InterPro" id="IPR000198">
    <property type="entry name" value="RhoGAP_dom"/>
</dbReference>
<dbReference type="InterPro" id="IPR036028">
    <property type="entry name" value="SH3-like_dom_sf"/>
</dbReference>
<dbReference type="InterPro" id="IPR001452">
    <property type="entry name" value="SH3_domain"/>
</dbReference>
<dbReference type="PANTHER" id="PTHR12552">
    <property type="entry name" value="OLIGOPHRENIN 1"/>
    <property type="match status" value="1"/>
</dbReference>
<dbReference type="PANTHER" id="PTHR12552:SF4">
    <property type="entry name" value="RHO GTPASE-ACTIVATING PROTEIN 26"/>
    <property type="match status" value="1"/>
</dbReference>
<dbReference type="Pfam" id="PF16746">
    <property type="entry name" value="BAR_3"/>
    <property type="match status" value="1"/>
</dbReference>
<dbReference type="Pfam" id="PF00169">
    <property type="entry name" value="PH"/>
    <property type="match status" value="1"/>
</dbReference>
<dbReference type="Pfam" id="PF00620">
    <property type="entry name" value="RhoGAP"/>
    <property type="match status" value="1"/>
</dbReference>
<dbReference type="Pfam" id="PF14604">
    <property type="entry name" value="SH3_9"/>
    <property type="match status" value="1"/>
</dbReference>
<dbReference type="SMART" id="SM00233">
    <property type="entry name" value="PH"/>
    <property type="match status" value="1"/>
</dbReference>
<dbReference type="SMART" id="SM00324">
    <property type="entry name" value="RhoGAP"/>
    <property type="match status" value="1"/>
</dbReference>
<dbReference type="SMART" id="SM00326">
    <property type="entry name" value="SH3"/>
    <property type="match status" value="1"/>
</dbReference>
<dbReference type="SUPFAM" id="SSF103657">
    <property type="entry name" value="BAR/IMD domain-like"/>
    <property type="match status" value="1"/>
</dbReference>
<dbReference type="SUPFAM" id="SSF48350">
    <property type="entry name" value="GTPase activation domain, GAP"/>
    <property type="match status" value="1"/>
</dbReference>
<dbReference type="SUPFAM" id="SSF50729">
    <property type="entry name" value="PH domain-like"/>
    <property type="match status" value="1"/>
</dbReference>
<dbReference type="SUPFAM" id="SSF50044">
    <property type="entry name" value="SH3-domain"/>
    <property type="match status" value="1"/>
</dbReference>
<dbReference type="PROSITE" id="PS50003">
    <property type="entry name" value="PH_DOMAIN"/>
    <property type="match status" value="1"/>
</dbReference>
<dbReference type="PROSITE" id="PS50238">
    <property type="entry name" value="RHOGAP"/>
    <property type="match status" value="1"/>
</dbReference>
<dbReference type="PROSITE" id="PS50002">
    <property type="entry name" value="SH3"/>
    <property type="match status" value="1"/>
</dbReference>
<name>RHG26_XENLA</name>
<protein>
    <recommendedName>
        <fullName>Rho GTPase-activating protein 26</fullName>
    </recommendedName>
    <alternativeName>
        <fullName>Rho-type GTPase-activating protein 26</fullName>
    </alternativeName>
</protein>
<organism>
    <name type="scientific">Xenopus laevis</name>
    <name type="common">African clawed frog</name>
    <dbReference type="NCBI Taxonomy" id="8355"/>
    <lineage>
        <taxon>Eukaryota</taxon>
        <taxon>Metazoa</taxon>
        <taxon>Chordata</taxon>
        <taxon>Craniata</taxon>
        <taxon>Vertebrata</taxon>
        <taxon>Euteleostomi</taxon>
        <taxon>Amphibia</taxon>
        <taxon>Batrachia</taxon>
        <taxon>Anura</taxon>
        <taxon>Pipoidea</taxon>
        <taxon>Pipidae</taxon>
        <taxon>Xenopodinae</taxon>
        <taxon>Xenopus</taxon>
        <taxon>Xenopus</taxon>
    </lineage>
</organism>
<keyword id="KW-0965">Cell junction</keyword>
<keyword id="KW-0963">Cytoplasm</keyword>
<keyword id="KW-0206">Cytoskeleton</keyword>
<keyword id="KW-0967">Endosome</keyword>
<keyword id="KW-0343">GTPase activation</keyword>
<keyword id="KW-0472">Membrane</keyword>
<keyword id="KW-1185">Reference proteome</keyword>
<keyword id="KW-0728">SH3 domain</keyword>
<gene>
    <name type="primary">arhgap26</name>
</gene>
<evidence type="ECO:0000250" key="1"/>
<evidence type="ECO:0000250" key="2">
    <source>
        <dbReference type="UniProtKB" id="A1A4S6"/>
    </source>
</evidence>
<evidence type="ECO:0000250" key="3">
    <source>
        <dbReference type="UniProtKB" id="Q5ZMW5"/>
    </source>
</evidence>
<evidence type="ECO:0000250" key="4">
    <source>
        <dbReference type="UniProtKB" id="Q9UNA1"/>
    </source>
</evidence>
<evidence type="ECO:0000255" key="5">
    <source>
        <dbReference type="PROSITE-ProRule" id="PRU00145"/>
    </source>
</evidence>
<evidence type="ECO:0000255" key="6">
    <source>
        <dbReference type="PROSITE-ProRule" id="PRU00172"/>
    </source>
</evidence>
<evidence type="ECO:0000255" key="7">
    <source>
        <dbReference type="PROSITE-ProRule" id="PRU00192"/>
    </source>
</evidence>
<evidence type="ECO:0000256" key="8">
    <source>
        <dbReference type="SAM" id="MobiDB-lite"/>
    </source>
</evidence>
<accession>Q5U4T3</accession>
<comment type="function">
    <text evidence="3 4">GTPase-activating protein for rhoa and cdc42 (By similarity). May be involved in the regulation of neosynthesized protein export through a Rab-endososomal dependent export route (By similarity).</text>
</comment>
<comment type="subcellular location">
    <subcellularLocation>
        <location evidence="1">Cell junction</location>
        <location evidence="1">Focal adhesion</location>
    </subcellularLocation>
    <subcellularLocation>
        <location evidence="1">Cytoplasm</location>
        <location evidence="1">Cytoskeleton</location>
    </subcellularLocation>
    <subcellularLocation>
        <location evidence="4">Endosome membrane</location>
    </subcellularLocation>
    <text evidence="1">Colocalizes with actin stress fibers and cortical actin structures.</text>
</comment>
<proteinExistence type="evidence at transcript level"/>
<feature type="chain" id="PRO_0000355554" description="Rho GTPase-activating protein 26">
    <location>
        <begin position="1"/>
        <end position="771"/>
    </location>
</feature>
<feature type="domain" description="BAR" evidence="2">
    <location>
        <begin position="7"/>
        <end position="262"/>
    </location>
</feature>
<feature type="domain" description="PH" evidence="5">
    <location>
        <begin position="265"/>
        <end position="369"/>
    </location>
</feature>
<feature type="domain" description="Rho-GAP" evidence="6">
    <location>
        <begin position="383"/>
        <end position="568"/>
    </location>
</feature>
<feature type="domain" description="SH3" evidence="7">
    <location>
        <begin position="713"/>
        <end position="771"/>
    </location>
</feature>
<feature type="region of interest" description="Disordered" evidence="8">
    <location>
        <begin position="575"/>
        <end position="712"/>
    </location>
</feature>
<feature type="compositionally biased region" description="Basic and acidic residues" evidence="8">
    <location>
        <begin position="608"/>
        <end position="617"/>
    </location>
</feature>
<feature type="compositionally biased region" description="Low complexity" evidence="8">
    <location>
        <begin position="618"/>
        <end position="637"/>
    </location>
</feature>
<feature type="compositionally biased region" description="Polar residues" evidence="8">
    <location>
        <begin position="638"/>
        <end position="650"/>
    </location>
</feature>
<feature type="compositionally biased region" description="Polar residues" evidence="8">
    <location>
        <begin position="662"/>
        <end position="671"/>
    </location>
</feature>
<feature type="compositionally biased region" description="Low complexity" evidence="8">
    <location>
        <begin position="673"/>
        <end position="683"/>
    </location>
</feature>
<feature type="compositionally biased region" description="Low complexity" evidence="8">
    <location>
        <begin position="691"/>
        <end position="712"/>
    </location>
</feature>
<feature type="site" description="Arginine finger; crucial for GTP hydrolysis by stabilizing the transition state" evidence="6">
    <location>
        <position position="412"/>
    </location>
</feature>
<sequence>MGLPPLEFSDCYLDSPQFRERLKSHETELDKTNKFIKELIKDGKSLVAAHKSLSFAKRKFAGSLNEFKFRCIGDAETDDEICIARSLQEFAAVLGNLEDERIRMIDNAGEVLITPLEKFRKEQISAAKEVKKKYDKETEKYCGMLEKHMNLSSKKKEVLLHEADVQLDQMRQHFYEVSLEYVLKVHEVQERKMFEFVEPLLAFLQGLFTFYHHGYELAKDFSDFKTQLSISIQNTRDRFEGTRSEVESLMKKMKENPHEHLALSPFTMEGYLYVQEKRHFGTSWVKHYCTYQRETKQMTMVPFDQKSGGKVGEEELVQLKSCIRRKTESIEKRFCFDVEGVDRPTVLTMQALSEEDRKLWMEAMDGREPVYNSNKDSQSEGTAQLDNIGFSIIRKCIQAIETRGINEQGLYRIVGVNSRVQKLLNILMDPKISPETETEIPSEWEIKTITSSLKTYLRMLPGPLMTYQFQRSFIKAAKQESQESRIKEIHCLIHRLPEKNRQMLHLLMTHLANVAAHHKQNLMTVANLGVVFGPTLLRPQEETVAAIMDIKFQNIVVEIIIENYEEMFSTVPEMPQTNSQLHLSRKRSTDSKPPSCSERPLTLFHTSHSSEKEEKRNSVNSSAESVSSSNANSSVNSTCTQRSNMNNLNASDPDLDVAKVSRPNSLLNPKNISGLLPSSLNPSPTSPPTCPMVSAPSSPMPTSSTSSDSSPVSVPRKAKALYACKAEHDSELSFSAGTVFENVCPSQEPGWLEGTLNGKTGLIPENYVEFL</sequence>
<reference key="1">
    <citation type="submission" date="2004-10" db="EMBL/GenBank/DDBJ databases">
        <authorList>
            <consortium name="NIH - Xenopus Gene Collection (XGC) project"/>
        </authorList>
    </citation>
    <scope>NUCLEOTIDE SEQUENCE [LARGE SCALE MRNA]</scope>
    <source>
        <tissue>Eye</tissue>
    </source>
</reference>